<comment type="function">
    <text evidence="2 3 8">Plays an important role in caveolar biogenesis and morphology. Regulates caveolae morphology by inducing membrane curvature within caveolae (By similarity). Plays a role in caveola formation in a tissue-specific manner. Required for the formation of caveolae in the lung and fat endothelia but not in the heart endothelia. Negatively regulates the size or stability of CAVIN complexes in the lung endothelial cells (PubMed:23652019). May play a role in targeting PRKCA to caveolae (By similarity).</text>
</comment>
<comment type="subunit">
    <text evidence="2 3 7 9">Component of the CAVIN complex composed of CAVIN1, CAVIN2, CAVIN3 and CAVIN4 (PubMed:19546242). Binds to PRKCA in the presence of phosphatidylserine. Interacts with CAVIN4; this augments the transactivation of NPPA by CAVIN4 (By similarity). Interacts with CAVIN1 (PubMed:19546242, PubMed:25588833). Interacts with CAV3 (By similarity).</text>
</comment>
<comment type="subcellular location">
    <subcellularLocation>
        <location evidence="6 7">Cytoplasm</location>
        <location evidence="6 7">Cytosol</location>
    </subcellularLocation>
    <subcellularLocation>
        <location evidence="7">Membrane</location>
        <location evidence="7">Caveola</location>
    </subcellularLocation>
    <text evidence="7">Localizes in the caveolae in a caveolin-dependent manner.</text>
</comment>
<comment type="tissue specificity">
    <text evidence="7 8 10">Heart, adipose tissue, lung and endothelial cells (at protein level). Highly expressed in kidney and expressed at lower levels in liver, spleen, thymus, stomach, intestine and uterus.</text>
</comment>
<comment type="developmental stage">
    <text evidence="6">Expression gradually increases during embryonic stages and reaches a maximum in neonates.</text>
</comment>
<comment type="induction">
    <text evidence="6 10">Up-regulated in response to cardiac hypertrophy and in serum-starved but not in density-dependent growth-arrested NIH3T3 cells. Down-regulated within 6 hours after the addition of serum or epidermal growth factor to serum-starved cells.</text>
</comment>
<comment type="domain">
    <text evidence="2">The leucine-zipper domain is essential for its localization in the caveolae.</text>
</comment>
<comment type="PTM">
    <text evidence="1">The N-terminus is blocked.</text>
</comment>
<comment type="disruption phenotype">
    <text evidence="8">Mice show loss of endothelial caveolae in lung and adipose tissue but no effect on the abundance of endothelial caveolae in the heart.</text>
</comment>
<comment type="miscellaneous">
    <text evidence="1">Binds phosphatidylserine (PS) in a calcium-independent manner. PS-binding is inhibited by phosphotidic acid and phosphatidylinositol. Does not bind phosphatidylcholine (By similarity).</text>
</comment>
<comment type="similarity">
    <text evidence="12">Belongs to the CAVIN family.</text>
</comment>
<sequence length="418" mass="46764">MGEDAAQAEKFQHPNTDMLQEKPSSPSPMPSSTPSPSLNLGSTEEAIRDNSQVNAVTVHTLLDKLVNMLDAVRENQHNMEQRQINLEGSVKGIQNDLTKLSKYQASTSNTVSKLLEKSRKVSAHTRAVRERLERQCVQVKRLENNHAQLLRRNHFKVLIFQEESEIPASVFVKEPVPSAAEGKEELADENKSLEETLHNVDLSSDDELPRDEEALEDSAEEKMEESRAEKIKRSSLKKVDSLKKAFSRQNIEKKMNKLGTKIVSVERREKIKKSLTPNHQKASSGKSSPFKVSPLSFGRKKVREGESSVENETKLEDQMQEDREEGSFTEGLSEASLPSGLMEGSAEDAEKSARRGNNSAVGSNADLTIEEDEEEEPVALQQAQQVRYESGYMLNSEEMEEPSEKQVQPAVLHVDQTA</sequence>
<dbReference type="EMBL" id="S67386">
    <property type="protein sequence ID" value="AAB28953.1"/>
    <property type="molecule type" value="mRNA"/>
</dbReference>
<dbReference type="EMBL" id="AK035324">
    <property type="protein sequence ID" value="BAC29033.1"/>
    <property type="molecule type" value="mRNA"/>
</dbReference>
<dbReference type="EMBL" id="AK084096">
    <property type="protein sequence ID" value="BAC39116.1"/>
    <property type="molecule type" value="mRNA"/>
</dbReference>
<dbReference type="EMBL" id="AK132324">
    <property type="protein sequence ID" value="BAE21104.1"/>
    <property type="molecule type" value="mRNA"/>
</dbReference>
<dbReference type="EMBL" id="BC020008">
    <property type="protein sequence ID" value="AAH20008.1"/>
    <property type="molecule type" value="mRNA"/>
</dbReference>
<dbReference type="EMBL" id="BC027005">
    <property type="protein sequence ID" value="AAH27005.1"/>
    <property type="molecule type" value="mRNA"/>
</dbReference>
<dbReference type="CCDS" id="CCDS14940.1"/>
<dbReference type="RefSeq" id="NP_620080.1">
    <property type="nucleotide sequence ID" value="NM_138741.1"/>
</dbReference>
<dbReference type="SMR" id="Q63918"/>
<dbReference type="BioGRID" id="203146">
    <property type="interactions" value="26"/>
</dbReference>
<dbReference type="FunCoup" id="Q63918">
    <property type="interactions" value="857"/>
</dbReference>
<dbReference type="IntAct" id="Q63918">
    <property type="interactions" value="3"/>
</dbReference>
<dbReference type="MINT" id="Q63918"/>
<dbReference type="STRING" id="10090.ENSMUSP00000055694"/>
<dbReference type="GlyGen" id="Q63918">
    <property type="glycosylation" value="1 site, 1 O-linked glycan (1 site)"/>
</dbReference>
<dbReference type="iPTMnet" id="Q63918"/>
<dbReference type="PhosphoSitePlus" id="Q63918"/>
<dbReference type="SwissPalm" id="Q63918"/>
<dbReference type="CPTAC" id="non-CPTAC-3772"/>
<dbReference type="jPOST" id="Q63918"/>
<dbReference type="PaxDb" id="10090-ENSMUSP00000055694"/>
<dbReference type="PeptideAtlas" id="Q63918"/>
<dbReference type="ProteomicsDB" id="265671"/>
<dbReference type="Pumba" id="Q63918"/>
<dbReference type="Antibodypedia" id="34051">
    <property type="antibodies" value="124 antibodies from 26 providers"/>
</dbReference>
<dbReference type="DNASU" id="20324"/>
<dbReference type="Ensembl" id="ENSMUST00000051572.8">
    <property type="protein sequence ID" value="ENSMUSP00000055694.7"/>
    <property type="gene ID" value="ENSMUSG00000045954.8"/>
</dbReference>
<dbReference type="GeneID" id="20324"/>
<dbReference type="KEGG" id="mmu:20324"/>
<dbReference type="UCSC" id="uc007axk.1">
    <property type="organism name" value="mouse"/>
</dbReference>
<dbReference type="AGR" id="MGI:99513"/>
<dbReference type="CTD" id="8436"/>
<dbReference type="MGI" id="MGI:99513">
    <property type="gene designation" value="Cavin2"/>
</dbReference>
<dbReference type="VEuPathDB" id="HostDB:ENSMUSG00000045954"/>
<dbReference type="eggNOG" id="ENOG502QQCA">
    <property type="taxonomic scope" value="Eukaryota"/>
</dbReference>
<dbReference type="GeneTree" id="ENSGT00950000182910"/>
<dbReference type="HOGENOM" id="CLU_039470_1_0_1"/>
<dbReference type="InParanoid" id="Q63918"/>
<dbReference type="OMA" id="QMPNDQE"/>
<dbReference type="OrthoDB" id="8910748at2759"/>
<dbReference type="PhylomeDB" id="Q63918"/>
<dbReference type="TreeFam" id="TF331031"/>
<dbReference type="BioGRID-ORCS" id="20324">
    <property type="hits" value="5 hits in 77 CRISPR screens"/>
</dbReference>
<dbReference type="ChiTaRS" id="Sdpr">
    <property type="organism name" value="mouse"/>
</dbReference>
<dbReference type="PRO" id="PR:Q63918"/>
<dbReference type="Proteomes" id="UP000000589">
    <property type="component" value="Chromosome 1"/>
</dbReference>
<dbReference type="RNAct" id="Q63918">
    <property type="molecule type" value="protein"/>
</dbReference>
<dbReference type="Bgee" id="ENSMUSG00000045954">
    <property type="expression patterns" value="Expressed in right lung and 233 other cell types or tissues"/>
</dbReference>
<dbReference type="GO" id="GO:0005901">
    <property type="term" value="C:caveola"/>
    <property type="evidence" value="ECO:0000250"/>
    <property type="project" value="UniProtKB"/>
</dbReference>
<dbReference type="GO" id="GO:0005737">
    <property type="term" value="C:cytoplasm"/>
    <property type="evidence" value="ECO:0000266"/>
    <property type="project" value="MGI"/>
</dbReference>
<dbReference type="GO" id="GO:0005829">
    <property type="term" value="C:cytosol"/>
    <property type="evidence" value="ECO:0000250"/>
    <property type="project" value="UniProtKB"/>
</dbReference>
<dbReference type="GO" id="GO:0005654">
    <property type="term" value="C:nucleoplasm"/>
    <property type="evidence" value="ECO:0007669"/>
    <property type="project" value="Ensembl"/>
</dbReference>
<dbReference type="GO" id="GO:0001786">
    <property type="term" value="F:phosphatidylserine binding"/>
    <property type="evidence" value="ECO:0000250"/>
    <property type="project" value="UniProtKB"/>
</dbReference>
<dbReference type="GO" id="GO:0097320">
    <property type="term" value="P:plasma membrane tubulation"/>
    <property type="evidence" value="ECO:0000250"/>
    <property type="project" value="UniProtKB"/>
</dbReference>
<dbReference type="GO" id="GO:0045944">
    <property type="term" value="P:positive regulation of transcription by RNA polymerase II"/>
    <property type="evidence" value="ECO:0000266"/>
    <property type="project" value="MGI"/>
</dbReference>
<dbReference type="InterPro" id="IPR026752">
    <property type="entry name" value="Cavin_fam"/>
</dbReference>
<dbReference type="PANTHER" id="PTHR15240:SF1">
    <property type="entry name" value="CAVEOLAE-ASSOCIATED PROTEIN 2"/>
    <property type="match status" value="1"/>
</dbReference>
<dbReference type="PANTHER" id="PTHR15240">
    <property type="entry name" value="CAVIN"/>
    <property type="match status" value="1"/>
</dbReference>
<dbReference type="Pfam" id="PF15237">
    <property type="entry name" value="PTRF_SDPR"/>
    <property type="match status" value="1"/>
</dbReference>
<proteinExistence type="evidence at protein level"/>
<name>CAVN2_MOUSE</name>
<feature type="initiator methionine" description="Removed" evidence="2">
    <location>
        <position position="1"/>
    </location>
</feature>
<feature type="chain" id="PRO_0000238919" description="Caveolae-associated protein 2">
    <location>
        <begin position="2"/>
        <end position="418"/>
    </location>
</feature>
<feature type="region of interest" description="Disordered" evidence="5">
    <location>
        <begin position="1"/>
        <end position="42"/>
    </location>
</feature>
<feature type="region of interest" description="Interaction with CAVIN1" evidence="9">
    <location>
        <begin position="2"/>
        <end position="168"/>
    </location>
</feature>
<feature type="region of interest" description="Leucine-zipper" evidence="2">
    <location>
        <begin position="62"/>
        <end position="100"/>
    </location>
</feature>
<feature type="region of interest" description="Disordered" evidence="5">
    <location>
        <begin position="200"/>
        <end position="238"/>
    </location>
</feature>
<feature type="region of interest" description="Disordered" evidence="5">
    <location>
        <begin position="262"/>
        <end position="382"/>
    </location>
</feature>
<feature type="region of interest" description="Disordered" evidence="5">
    <location>
        <begin position="396"/>
        <end position="418"/>
    </location>
</feature>
<feature type="coiled-coil region" evidence="4">
    <location>
        <begin position="61"/>
        <end position="87"/>
    </location>
</feature>
<feature type="coiled-coil region" evidence="4">
    <location>
        <begin position="126"/>
        <end position="268"/>
    </location>
</feature>
<feature type="compositionally biased region" description="Acidic residues" evidence="5">
    <location>
        <begin position="203"/>
        <end position="219"/>
    </location>
</feature>
<feature type="compositionally biased region" description="Basic and acidic residues" evidence="5">
    <location>
        <begin position="220"/>
        <end position="238"/>
    </location>
</feature>
<feature type="compositionally biased region" description="Polar residues" evidence="5">
    <location>
        <begin position="275"/>
        <end position="287"/>
    </location>
</feature>
<feature type="compositionally biased region" description="Basic and acidic residues" evidence="5">
    <location>
        <begin position="303"/>
        <end position="321"/>
    </location>
</feature>
<feature type="compositionally biased region" description="Polar residues" evidence="5">
    <location>
        <begin position="355"/>
        <end position="366"/>
    </location>
</feature>
<feature type="compositionally biased region" description="Acidic residues" evidence="5">
    <location>
        <begin position="368"/>
        <end position="377"/>
    </location>
</feature>
<feature type="modified residue" description="N-acetylglycine" evidence="2">
    <location>
        <position position="2"/>
    </location>
</feature>
<feature type="modified residue" description="Phosphoserine" evidence="22">
    <location>
        <position position="27"/>
    </location>
</feature>
<feature type="modified residue" description="Phosphoserine" evidence="22">
    <location>
        <position position="35"/>
    </location>
</feature>
<feature type="modified residue" description="Phosphoserine" evidence="22">
    <location>
        <position position="37"/>
    </location>
</feature>
<feature type="modified residue" description="Phosphoserine" evidence="3">
    <location>
        <position position="51"/>
    </location>
</feature>
<feature type="modified residue" description="Phosphothreonine" evidence="2">
    <location>
        <position position="196"/>
    </location>
</feature>
<feature type="modified residue" description="Phosphoserine" evidence="22">
    <location>
        <position position="203"/>
    </location>
</feature>
<feature type="modified residue" description="Phosphoserine" evidence="22">
    <location>
        <position position="204"/>
    </location>
</feature>
<feature type="modified residue" description="Phosphoserine" evidence="20 22">
    <location>
        <position position="218"/>
    </location>
</feature>
<feature type="modified residue" description="Phosphoserine" evidence="22">
    <location>
        <position position="283"/>
    </location>
</feature>
<feature type="modified residue" description="Phosphoserine" evidence="22">
    <location>
        <position position="284"/>
    </location>
</feature>
<feature type="modified residue" description="Phosphoserine" evidence="22">
    <location>
        <position position="287"/>
    </location>
</feature>
<feature type="modified residue" description="Phosphoserine" evidence="21 22">
    <location>
        <position position="288"/>
    </location>
</feature>
<feature type="modified residue" description="Phosphoserine" evidence="20 21 22">
    <location>
        <position position="293"/>
    </location>
</feature>
<feature type="modified residue" description="Phosphoserine" evidence="22">
    <location>
        <position position="296"/>
    </location>
</feature>
<feature type="modified residue" description="Phosphoserine" evidence="22">
    <location>
        <position position="327"/>
    </location>
</feature>
<feature type="modified residue" description="Phosphoserine" evidence="22">
    <location>
        <position position="336"/>
    </location>
</feature>
<feature type="modified residue" description="Phosphoserine" evidence="21 22">
    <location>
        <position position="359"/>
    </location>
</feature>
<feature type="modified residue" description="Phosphoserine" evidence="21 22">
    <location>
        <position position="363"/>
    </location>
</feature>
<feature type="modified residue" description="Phosphothreonine" evidence="22">
    <location>
        <position position="368"/>
    </location>
</feature>
<feature type="modified residue" description="Phosphotyrosine" evidence="22">
    <location>
        <position position="388"/>
    </location>
</feature>
<feature type="modified residue" description="Phosphoserine" evidence="22">
    <location>
        <position position="390"/>
    </location>
</feature>
<feature type="modified residue" description="Phosphoserine" evidence="3">
    <location>
        <position position="396"/>
    </location>
</feature>
<feature type="sequence conflict" description="In Ref. 2; BAE21104." evidence="12" ref="2">
    <original>P</original>
    <variation>L</variation>
    <location>
        <position position="14"/>
    </location>
</feature>
<feature type="sequence conflict" description="In Ref. 2; BAC29033." evidence="12" ref="2">
    <original>Q</original>
    <variation>L</variation>
    <location>
        <position position="76"/>
    </location>
</feature>
<feature type="sequence conflict" description="In Ref. 2; BAC29033." evidence="12" ref="2">
    <original>K</original>
    <variation>R</variation>
    <location>
        <position position="173"/>
    </location>
</feature>
<reference evidence="12 13" key="1">
    <citation type="journal article" date="1993" name="Cell Growth Differ.">
        <title>Serum deprivation response gene is induced by serum starvation but not by contact inhibition.</title>
        <authorList>
            <person name="Gustincich S."/>
            <person name="Schneider C."/>
        </authorList>
    </citation>
    <scope>NUCLEOTIDE SEQUENCE [MRNA]</scope>
    <scope>TISSUE SPECIFICITY</scope>
    <scope>INDUCTION</scope>
</reference>
<reference evidence="17" key="2">
    <citation type="journal article" date="2005" name="Science">
        <title>The transcriptional landscape of the mammalian genome.</title>
        <authorList>
            <person name="Carninci P."/>
            <person name="Kasukawa T."/>
            <person name="Katayama S."/>
            <person name="Gough J."/>
            <person name="Frith M.C."/>
            <person name="Maeda N."/>
            <person name="Oyama R."/>
            <person name="Ravasi T."/>
            <person name="Lenhard B."/>
            <person name="Wells C."/>
            <person name="Kodzius R."/>
            <person name="Shimokawa K."/>
            <person name="Bajic V.B."/>
            <person name="Brenner S.E."/>
            <person name="Batalov S."/>
            <person name="Forrest A.R."/>
            <person name="Zavolan M."/>
            <person name="Davis M.J."/>
            <person name="Wilming L.G."/>
            <person name="Aidinis V."/>
            <person name="Allen J.E."/>
            <person name="Ambesi-Impiombato A."/>
            <person name="Apweiler R."/>
            <person name="Aturaliya R.N."/>
            <person name="Bailey T.L."/>
            <person name="Bansal M."/>
            <person name="Baxter L."/>
            <person name="Beisel K.W."/>
            <person name="Bersano T."/>
            <person name="Bono H."/>
            <person name="Chalk A.M."/>
            <person name="Chiu K.P."/>
            <person name="Choudhary V."/>
            <person name="Christoffels A."/>
            <person name="Clutterbuck D.R."/>
            <person name="Crowe M.L."/>
            <person name="Dalla E."/>
            <person name="Dalrymple B.P."/>
            <person name="de Bono B."/>
            <person name="Della Gatta G."/>
            <person name="di Bernardo D."/>
            <person name="Down T."/>
            <person name="Engstrom P."/>
            <person name="Fagiolini M."/>
            <person name="Faulkner G."/>
            <person name="Fletcher C.F."/>
            <person name="Fukushima T."/>
            <person name="Furuno M."/>
            <person name="Futaki S."/>
            <person name="Gariboldi M."/>
            <person name="Georgii-Hemming P."/>
            <person name="Gingeras T.R."/>
            <person name="Gojobori T."/>
            <person name="Green R.E."/>
            <person name="Gustincich S."/>
            <person name="Harbers M."/>
            <person name="Hayashi Y."/>
            <person name="Hensch T.K."/>
            <person name="Hirokawa N."/>
            <person name="Hill D."/>
            <person name="Huminiecki L."/>
            <person name="Iacono M."/>
            <person name="Ikeo K."/>
            <person name="Iwama A."/>
            <person name="Ishikawa T."/>
            <person name="Jakt M."/>
            <person name="Kanapin A."/>
            <person name="Katoh M."/>
            <person name="Kawasawa Y."/>
            <person name="Kelso J."/>
            <person name="Kitamura H."/>
            <person name="Kitano H."/>
            <person name="Kollias G."/>
            <person name="Krishnan S.P."/>
            <person name="Kruger A."/>
            <person name="Kummerfeld S.K."/>
            <person name="Kurochkin I.V."/>
            <person name="Lareau L.F."/>
            <person name="Lazarevic D."/>
            <person name="Lipovich L."/>
            <person name="Liu J."/>
            <person name="Liuni S."/>
            <person name="McWilliam S."/>
            <person name="Madan Babu M."/>
            <person name="Madera M."/>
            <person name="Marchionni L."/>
            <person name="Matsuda H."/>
            <person name="Matsuzawa S."/>
            <person name="Miki H."/>
            <person name="Mignone F."/>
            <person name="Miyake S."/>
            <person name="Morris K."/>
            <person name="Mottagui-Tabar S."/>
            <person name="Mulder N."/>
            <person name="Nakano N."/>
            <person name="Nakauchi H."/>
            <person name="Ng P."/>
            <person name="Nilsson R."/>
            <person name="Nishiguchi S."/>
            <person name="Nishikawa S."/>
            <person name="Nori F."/>
            <person name="Ohara O."/>
            <person name="Okazaki Y."/>
            <person name="Orlando V."/>
            <person name="Pang K.C."/>
            <person name="Pavan W.J."/>
            <person name="Pavesi G."/>
            <person name="Pesole G."/>
            <person name="Petrovsky N."/>
            <person name="Piazza S."/>
            <person name="Reed J."/>
            <person name="Reid J.F."/>
            <person name="Ring B.Z."/>
            <person name="Ringwald M."/>
            <person name="Rost B."/>
            <person name="Ruan Y."/>
            <person name="Salzberg S.L."/>
            <person name="Sandelin A."/>
            <person name="Schneider C."/>
            <person name="Schoenbach C."/>
            <person name="Sekiguchi K."/>
            <person name="Semple C.A."/>
            <person name="Seno S."/>
            <person name="Sessa L."/>
            <person name="Sheng Y."/>
            <person name="Shibata Y."/>
            <person name="Shimada H."/>
            <person name="Shimada K."/>
            <person name="Silva D."/>
            <person name="Sinclair B."/>
            <person name="Sperling S."/>
            <person name="Stupka E."/>
            <person name="Sugiura K."/>
            <person name="Sultana R."/>
            <person name="Takenaka Y."/>
            <person name="Taki K."/>
            <person name="Tammoja K."/>
            <person name="Tan S.L."/>
            <person name="Tang S."/>
            <person name="Taylor M.S."/>
            <person name="Tegner J."/>
            <person name="Teichmann S.A."/>
            <person name="Ueda H.R."/>
            <person name="van Nimwegen E."/>
            <person name="Verardo R."/>
            <person name="Wei C.L."/>
            <person name="Yagi K."/>
            <person name="Yamanishi H."/>
            <person name="Zabarovsky E."/>
            <person name="Zhu S."/>
            <person name="Zimmer A."/>
            <person name="Hide W."/>
            <person name="Bult C."/>
            <person name="Grimmond S.M."/>
            <person name="Teasdale R.D."/>
            <person name="Liu E.T."/>
            <person name="Brusic V."/>
            <person name="Quackenbush J."/>
            <person name="Wahlestedt C."/>
            <person name="Mattick J.S."/>
            <person name="Hume D.A."/>
            <person name="Kai C."/>
            <person name="Sasaki D."/>
            <person name="Tomaru Y."/>
            <person name="Fukuda S."/>
            <person name="Kanamori-Katayama M."/>
            <person name="Suzuki M."/>
            <person name="Aoki J."/>
            <person name="Arakawa T."/>
            <person name="Iida J."/>
            <person name="Imamura K."/>
            <person name="Itoh M."/>
            <person name="Kato T."/>
            <person name="Kawaji H."/>
            <person name="Kawagashira N."/>
            <person name="Kawashima T."/>
            <person name="Kojima M."/>
            <person name="Kondo S."/>
            <person name="Konno H."/>
            <person name="Nakano K."/>
            <person name="Ninomiya N."/>
            <person name="Nishio T."/>
            <person name="Okada M."/>
            <person name="Plessy C."/>
            <person name="Shibata K."/>
            <person name="Shiraki T."/>
            <person name="Suzuki S."/>
            <person name="Tagami M."/>
            <person name="Waki K."/>
            <person name="Watahiki A."/>
            <person name="Okamura-Oho Y."/>
            <person name="Suzuki H."/>
            <person name="Kawai J."/>
            <person name="Hayashizaki Y."/>
        </authorList>
    </citation>
    <scope>NUCLEOTIDE SEQUENCE [LARGE SCALE MRNA]</scope>
    <source>
        <strain evidence="17">C57BL/6J</strain>
        <tissue evidence="18">Embryonic head</tissue>
        <tissue evidence="17">Embryonic spinal ganglion</tissue>
        <tissue evidence="16">Urinary bladder</tissue>
    </source>
</reference>
<reference evidence="14" key="3">
    <citation type="journal article" date="2004" name="Genome Res.">
        <title>The status, quality, and expansion of the NIH full-length cDNA project: the Mammalian Gene Collection (MGC).</title>
        <authorList>
            <consortium name="The MGC Project Team"/>
        </authorList>
    </citation>
    <scope>NUCLEOTIDE SEQUENCE [LARGE SCALE MRNA]</scope>
    <source>
        <strain evidence="15">C57BL/6J</strain>
        <strain evidence="14">FVB/N</strain>
        <tissue evidence="14">Mammary gland</tissue>
        <tissue evidence="15">Retina</tissue>
    </source>
</reference>
<reference key="4">
    <citation type="journal article" date="2007" name="Proc. Natl. Acad. Sci. U.S.A.">
        <title>Large-scale phosphorylation analysis of mouse liver.</title>
        <authorList>
            <person name="Villen J."/>
            <person name="Beausoleil S.A."/>
            <person name="Gerber S.A."/>
            <person name="Gygi S.P."/>
        </authorList>
    </citation>
    <scope>PHOSPHORYLATION [LARGE SCALE ANALYSIS] AT SER-218 AND SER-293</scope>
    <scope>IDENTIFICATION BY MASS SPECTROMETRY [LARGE SCALE ANALYSIS]</scope>
    <source>
        <tissue>Liver</tissue>
    </source>
</reference>
<reference key="5">
    <citation type="journal article" date="2008" name="Mol. Cell. Biol.">
        <title>MURC, a muscle-restricted coiled-coil protein that modulates the Rho/ROCK pathway, induces cardiac dysfunction and conduction disturbance.</title>
        <authorList>
            <person name="Ogata T."/>
            <person name="Ueyama T."/>
            <person name="Isodono K."/>
            <person name="Tagawa M."/>
            <person name="Takehara N."/>
            <person name="Kawashima T."/>
            <person name="Harada K."/>
            <person name="Takahashi T."/>
            <person name="Shioi T."/>
            <person name="Matsubara H."/>
            <person name="Oh H."/>
        </authorList>
    </citation>
    <scope>SUBCELLULAR LOCATION</scope>
    <scope>DEVELOPMENTAL STAGE</scope>
    <scope>INDUCTION</scope>
</reference>
<reference key="6">
    <citation type="journal article" date="2009" name="J. Cell Biol.">
        <title>MURC/Cavin-4 and cavin family members form tissue-specific caveolar complexes.</title>
        <authorList>
            <person name="Bastiani M."/>
            <person name="Liu L."/>
            <person name="Hill M.M."/>
            <person name="Jedrychowski M.P."/>
            <person name="Nixon S.J."/>
            <person name="Lo H.P."/>
            <person name="Abankwa D."/>
            <person name="Luetterforst R."/>
            <person name="Fernandez-Rojo M."/>
            <person name="Breen M.R."/>
            <person name="Gygi S.P."/>
            <person name="Vinten J."/>
            <person name="Walser P.J."/>
            <person name="North K.N."/>
            <person name="Hancock J.F."/>
            <person name="Pilch P.F."/>
            <person name="Parton R.G."/>
        </authorList>
    </citation>
    <scope>IDENTIFICATION IN THE CAVIN COMPLEX</scope>
    <scope>INTERACTION WITH CAVIN1</scope>
    <scope>TISSUE SPECIFICITY</scope>
    <scope>SUBCELLULAR LOCATION</scope>
</reference>
<reference key="7">
    <citation type="journal article" date="2009" name="Mol. Cell. Proteomics">
        <title>Large scale localization of protein phosphorylation by use of electron capture dissociation mass spectrometry.</title>
        <authorList>
            <person name="Sweet S.M."/>
            <person name="Bailey C.M."/>
            <person name="Cunningham D.L."/>
            <person name="Heath J.K."/>
            <person name="Cooper H.J."/>
        </authorList>
    </citation>
    <scope>PHOSPHORYLATION [LARGE SCALE ANALYSIS] AT SER-288; SER-293; SER-359 AND SER-363</scope>
    <scope>IDENTIFICATION BY MASS SPECTROMETRY [LARGE SCALE ANALYSIS]</scope>
    <source>
        <tissue>Embryonic fibroblast</tissue>
    </source>
</reference>
<reference key="8">
    <citation type="journal article" date="2010" name="Cell">
        <title>A tissue-specific atlas of mouse protein phosphorylation and expression.</title>
        <authorList>
            <person name="Huttlin E.L."/>
            <person name="Jedrychowski M.P."/>
            <person name="Elias J.E."/>
            <person name="Goswami T."/>
            <person name="Rad R."/>
            <person name="Beausoleil S.A."/>
            <person name="Villen J."/>
            <person name="Haas W."/>
            <person name="Sowa M.E."/>
            <person name="Gygi S.P."/>
        </authorList>
    </citation>
    <scope>PHOSPHORYLATION [LARGE SCALE ANALYSIS] AT SER-27; SER-35; SER-37; SER-203; SER-204; SER-218; SER-283; SER-284; SER-287; SER-288; SER-293; SER-296; SER-327; SER-336; SER-359; SER-363; THR-368; TYR-388 AND SER-390</scope>
    <scope>IDENTIFICATION BY MASS SPECTROMETRY [LARGE SCALE ANALYSIS]</scope>
    <source>
        <tissue>Brain</tissue>
        <tissue>Brown adipose tissue</tissue>
        <tissue>Heart</tissue>
        <tissue>Kidney</tissue>
        <tissue>Liver</tissue>
        <tissue>Lung</tissue>
        <tissue>Pancreas</tissue>
        <tissue>Spleen</tissue>
        <tissue>Testis</tissue>
    </source>
</reference>
<reference key="9">
    <citation type="journal article" date="2013" name="Nat. Commun.">
        <title>Deletion of cavin genes reveals tissue-specific mechanisms for morphogenesis of endothelial caveolae.</title>
        <authorList>
            <person name="Hansen C.G."/>
            <person name="Shvets E."/>
            <person name="Howard G."/>
            <person name="Riento K."/>
            <person name="Nichols B.J."/>
        </authorList>
    </citation>
    <scope>FUNCTION</scope>
    <scope>DISRUPTION PHENOTYPE</scope>
    <scope>TISSUE SPECIFICITY</scope>
</reference>
<reference key="10">
    <citation type="journal article" date="2015" name="J. Cell Sci.">
        <title>Cavin3 interacts with cavin1 and caveolin1 to increase surface dynamics of caveolae.</title>
        <authorList>
            <person name="Mohan J."/>
            <person name="Moren B."/>
            <person name="Larsson E."/>
            <person name="Holst M.R."/>
            <person name="Lundmark R."/>
        </authorList>
    </citation>
    <scope>INTERACTION WITH CAVIN1</scope>
</reference>
<accession>Q63918</accession>
<accession>Q3V1P6</accession>
<accession>Q78EC3</accession>
<accession>Q8CBT4</accession>
<organism>
    <name type="scientific">Mus musculus</name>
    <name type="common">Mouse</name>
    <dbReference type="NCBI Taxonomy" id="10090"/>
    <lineage>
        <taxon>Eukaryota</taxon>
        <taxon>Metazoa</taxon>
        <taxon>Chordata</taxon>
        <taxon>Craniata</taxon>
        <taxon>Vertebrata</taxon>
        <taxon>Euteleostomi</taxon>
        <taxon>Mammalia</taxon>
        <taxon>Eutheria</taxon>
        <taxon>Euarchontoglires</taxon>
        <taxon>Glires</taxon>
        <taxon>Rodentia</taxon>
        <taxon>Myomorpha</taxon>
        <taxon>Muroidea</taxon>
        <taxon>Muridae</taxon>
        <taxon>Murinae</taxon>
        <taxon>Mus</taxon>
        <taxon>Mus</taxon>
    </lineage>
</organism>
<gene>
    <name type="primary">Cavin2</name>
    <name evidence="19" type="synonym">Sdpr</name>
    <name evidence="11" type="synonym">Sdr</name>
</gene>
<evidence type="ECO:0000250" key="1"/>
<evidence type="ECO:0000250" key="2">
    <source>
        <dbReference type="UniProtKB" id="O95810"/>
    </source>
</evidence>
<evidence type="ECO:0000250" key="3">
    <source>
        <dbReference type="UniProtKB" id="Q66H98"/>
    </source>
</evidence>
<evidence type="ECO:0000255" key="4"/>
<evidence type="ECO:0000256" key="5">
    <source>
        <dbReference type="SAM" id="MobiDB-lite"/>
    </source>
</evidence>
<evidence type="ECO:0000269" key="6">
    <source>
    </source>
</evidence>
<evidence type="ECO:0000269" key="7">
    <source>
    </source>
</evidence>
<evidence type="ECO:0000269" key="8">
    <source>
    </source>
</evidence>
<evidence type="ECO:0000269" key="9">
    <source>
    </source>
</evidence>
<evidence type="ECO:0000269" key="10">
    <source>
    </source>
</evidence>
<evidence type="ECO:0000303" key="11">
    <source>
    </source>
</evidence>
<evidence type="ECO:0000305" key="12"/>
<evidence type="ECO:0000312" key="13">
    <source>
        <dbReference type="EMBL" id="AAB28953.1"/>
    </source>
</evidence>
<evidence type="ECO:0000312" key="14">
    <source>
        <dbReference type="EMBL" id="AAH20008.1"/>
    </source>
</evidence>
<evidence type="ECO:0000312" key="15">
    <source>
        <dbReference type="EMBL" id="AAH27005.1"/>
    </source>
</evidence>
<evidence type="ECO:0000312" key="16">
    <source>
        <dbReference type="EMBL" id="BAC29033.1"/>
    </source>
</evidence>
<evidence type="ECO:0000312" key="17">
    <source>
        <dbReference type="EMBL" id="BAC39116.1"/>
    </source>
</evidence>
<evidence type="ECO:0000312" key="18">
    <source>
        <dbReference type="EMBL" id="BAE21104.1"/>
    </source>
</evidence>
<evidence type="ECO:0000312" key="19">
    <source>
        <dbReference type="MGI" id="MGI:99513"/>
    </source>
</evidence>
<evidence type="ECO:0007744" key="20">
    <source>
    </source>
</evidence>
<evidence type="ECO:0007744" key="21">
    <source>
    </source>
</evidence>
<evidence type="ECO:0007744" key="22">
    <source>
    </source>
</evidence>
<protein>
    <recommendedName>
        <fullName>Caveolae-associated protein 2</fullName>
    </recommendedName>
    <alternativeName>
        <fullName>Cavin-2</fullName>
    </alternativeName>
    <alternativeName>
        <fullName>Phosphatidylserine-binding protein</fullName>
    </alternativeName>
    <alternativeName>
        <fullName>Serum deprivation-response protein</fullName>
    </alternativeName>
</protein>
<keyword id="KW-0007">Acetylation</keyword>
<keyword id="KW-0175">Coiled coil</keyword>
<keyword id="KW-0963">Cytoplasm</keyword>
<keyword id="KW-0446">Lipid-binding</keyword>
<keyword id="KW-0472">Membrane</keyword>
<keyword id="KW-0597">Phosphoprotein</keyword>
<keyword id="KW-1185">Reference proteome</keyword>